<sequence>MELNGIKPAAGAKHAKRRVGRGIGSGIGKTAGRGHKGQKSRAGGFHKVGFEGGQMPLQRRLPKRGFKSHLLKFNAEVTLTALEQLGLAEVDILALKQAGLVGQLAKVVKIVKTGELTKAVKLTGVGATAGAKAAIEAAGGSVA</sequence>
<proteinExistence type="inferred from homology"/>
<evidence type="ECO:0000255" key="1">
    <source>
        <dbReference type="HAMAP-Rule" id="MF_01341"/>
    </source>
</evidence>
<evidence type="ECO:0000256" key="2">
    <source>
        <dbReference type="SAM" id="MobiDB-lite"/>
    </source>
</evidence>
<evidence type="ECO:0000305" key="3"/>
<protein>
    <recommendedName>
        <fullName evidence="1">Large ribosomal subunit protein uL15</fullName>
    </recommendedName>
    <alternativeName>
        <fullName evidence="3">50S ribosomal protein L15</fullName>
    </alternativeName>
</protein>
<accession>C5CQ81</accession>
<organism>
    <name type="scientific">Variovorax paradoxus (strain S110)</name>
    <dbReference type="NCBI Taxonomy" id="543728"/>
    <lineage>
        <taxon>Bacteria</taxon>
        <taxon>Pseudomonadati</taxon>
        <taxon>Pseudomonadota</taxon>
        <taxon>Betaproteobacteria</taxon>
        <taxon>Burkholderiales</taxon>
        <taxon>Comamonadaceae</taxon>
        <taxon>Variovorax</taxon>
    </lineage>
</organism>
<dbReference type="EMBL" id="CP001635">
    <property type="protein sequence ID" value="ACS21653.1"/>
    <property type="molecule type" value="Genomic_DNA"/>
</dbReference>
<dbReference type="SMR" id="C5CQ81"/>
<dbReference type="STRING" id="543728.Vapar_5051"/>
<dbReference type="KEGG" id="vap:Vapar_5051"/>
<dbReference type="eggNOG" id="COG0200">
    <property type="taxonomic scope" value="Bacteria"/>
</dbReference>
<dbReference type="HOGENOM" id="CLU_055188_4_2_4"/>
<dbReference type="OrthoDB" id="9810293at2"/>
<dbReference type="GO" id="GO:0022625">
    <property type="term" value="C:cytosolic large ribosomal subunit"/>
    <property type="evidence" value="ECO:0007669"/>
    <property type="project" value="TreeGrafter"/>
</dbReference>
<dbReference type="GO" id="GO:0019843">
    <property type="term" value="F:rRNA binding"/>
    <property type="evidence" value="ECO:0007669"/>
    <property type="project" value="UniProtKB-UniRule"/>
</dbReference>
<dbReference type="GO" id="GO:0003735">
    <property type="term" value="F:structural constituent of ribosome"/>
    <property type="evidence" value="ECO:0007669"/>
    <property type="project" value="InterPro"/>
</dbReference>
<dbReference type="GO" id="GO:0006412">
    <property type="term" value="P:translation"/>
    <property type="evidence" value="ECO:0007669"/>
    <property type="project" value="UniProtKB-UniRule"/>
</dbReference>
<dbReference type="Gene3D" id="3.100.10.10">
    <property type="match status" value="1"/>
</dbReference>
<dbReference type="HAMAP" id="MF_01341">
    <property type="entry name" value="Ribosomal_uL15"/>
    <property type="match status" value="1"/>
</dbReference>
<dbReference type="InterPro" id="IPR030878">
    <property type="entry name" value="Ribosomal_uL15"/>
</dbReference>
<dbReference type="InterPro" id="IPR021131">
    <property type="entry name" value="Ribosomal_uL15/eL18"/>
</dbReference>
<dbReference type="InterPro" id="IPR036227">
    <property type="entry name" value="Ribosomal_uL15/eL18_sf"/>
</dbReference>
<dbReference type="InterPro" id="IPR005749">
    <property type="entry name" value="Ribosomal_uL15_bac-type"/>
</dbReference>
<dbReference type="NCBIfam" id="TIGR01071">
    <property type="entry name" value="rplO_bact"/>
    <property type="match status" value="1"/>
</dbReference>
<dbReference type="PANTHER" id="PTHR12934">
    <property type="entry name" value="50S RIBOSOMAL PROTEIN L15"/>
    <property type="match status" value="1"/>
</dbReference>
<dbReference type="PANTHER" id="PTHR12934:SF11">
    <property type="entry name" value="LARGE RIBOSOMAL SUBUNIT PROTEIN UL15M"/>
    <property type="match status" value="1"/>
</dbReference>
<dbReference type="Pfam" id="PF00828">
    <property type="entry name" value="Ribosomal_L27A"/>
    <property type="match status" value="1"/>
</dbReference>
<dbReference type="SUPFAM" id="SSF52080">
    <property type="entry name" value="Ribosomal proteins L15p and L18e"/>
    <property type="match status" value="1"/>
</dbReference>
<name>RL15_VARPS</name>
<feature type="chain" id="PRO_1000214720" description="Large ribosomal subunit protein uL15">
    <location>
        <begin position="1"/>
        <end position="143"/>
    </location>
</feature>
<feature type="region of interest" description="Disordered" evidence="2">
    <location>
        <begin position="1"/>
        <end position="51"/>
    </location>
</feature>
<feature type="compositionally biased region" description="Gly residues" evidence="2">
    <location>
        <begin position="21"/>
        <end position="31"/>
    </location>
</feature>
<reference key="1">
    <citation type="journal article" date="2011" name="J. Bacteriol.">
        <title>Complete genome sequence of the metabolically versatile plant growth-promoting endophyte, Variovorax paradoxus S110.</title>
        <authorList>
            <person name="Han J.I."/>
            <person name="Choi H.K."/>
            <person name="Lee S.W."/>
            <person name="Orwin P.M."/>
            <person name="Kim J."/>
            <person name="Laroe S.L."/>
            <person name="Kim T.G."/>
            <person name="O'Neil J."/>
            <person name="Leadbetter J.R."/>
            <person name="Lee S.Y."/>
            <person name="Hur C.G."/>
            <person name="Spain J.C."/>
            <person name="Ovchinnikova G."/>
            <person name="Goodwin L."/>
            <person name="Han C."/>
        </authorList>
    </citation>
    <scope>NUCLEOTIDE SEQUENCE [LARGE SCALE GENOMIC DNA]</scope>
    <source>
        <strain>S110</strain>
    </source>
</reference>
<keyword id="KW-0687">Ribonucleoprotein</keyword>
<keyword id="KW-0689">Ribosomal protein</keyword>
<keyword id="KW-0694">RNA-binding</keyword>
<keyword id="KW-0699">rRNA-binding</keyword>
<comment type="function">
    <text evidence="1">Binds to the 23S rRNA.</text>
</comment>
<comment type="subunit">
    <text evidence="1">Part of the 50S ribosomal subunit.</text>
</comment>
<comment type="similarity">
    <text evidence="1">Belongs to the universal ribosomal protein uL15 family.</text>
</comment>
<gene>
    <name evidence="1" type="primary">rplO</name>
    <name type="ordered locus">Vapar_5051</name>
</gene>